<sequence>MGFSGSRAWSKWLTICLAITHPFSVTAKSAADYYVHSLPGQPEGPLLKMHAGHIEISPETSGNLFFWHFENRHIADKPRTVVWLNGGPGCSSEDGALMEIGPYRLIDKETLNYTEGSWDEFANLLFVDQPVGTGFSYGSTEHYVHELDEMASQFVTFLEKWFEIFPHYEPDDLYFAGESYAGQYIPYIARAVLDRNKKQDVQANNRIWNLKGLLIGNGWISPQHQYPAYLPYVYQEGVVQAGTQEANLIEAKAAKCMKELNVEDTTGTVHIPDCEDILQAILDYTHKGKRCINMYDIRLTDDYSACGMNWPPDLRDIQPYLRRKDVVKALHINEEKQTGWTECAGAVGSSLKARNSKPAVELLPGLLEEGLPILLFSGQKDLICNHVGTEDMIKNMKWSGGTGFELSPGVWAPRQDWTFEGEPAGIYQQARNLTYVLFYNASHMVPFDYPRRSRDMLDKFLGVDITHIGGDPADSRIDGEKGPTTSVGAHPNSTAAAEREKEKLNTAAWKAYYKSGEVALVIVAIAAFAWGIFIWRSRRKHQSSGYRSIYPMLGLNSTGSLGQISHKHSRRNGDIEAADFDETELDDQPSQAFLSRSSRDGDAYAVGEEGSDEEDGASDGQQPMFDQSRGEEGRS</sequence>
<dbReference type="EC" id="3.4.16.6"/>
<dbReference type="EMBL" id="KN275958">
    <property type="protein sequence ID" value="EEH46198.1"/>
    <property type="molecule type" value="Genomic_DNA"/>
</dbReference>
<dbReference type="RefSeq" id="XP_010757777.1">
    <property type="nucleotide sequence ID" value="XM_010759475.1"/>
</dbReference>
<dbReference type="SMR" id="C1G2I2"/>
<dbReference type="FunCoup" id="C1G2I2">
    <property type="interactions" value="105"/>
</dbReference>
<dbReference type="STRING" id="502780.C1G2I2"/>
<dbReference type="ESTHER" id="parbd-kex1">
    <property type="family name" value="Carboxypeptidase_S10"/>
</dbReference>
<dbReference type="MEROPS" id="S10.007"/>
<dbReference type="GlyCosmos" id="C1G2I2">
    <property type="glycosylation" value="4 sites, No reported glycans"/>
</dbReference>
<dbReference type="GeneID" id="22581842"/>
<dbReference type="KEGG" id="pbn:PADG_02348"/>
<dbReference type="VEuPathDB" id="FungiDB:PADG_02348"/>
<dbReference type="eggNOG" id="KOG1282">
    <property type="taxonomic scope" value="Eukaryota"/>
</dbReference>
<dbReference type="HOGENOM" id="CLU_008523_11_0_1"/>
<dbReference type="InParanoid" id="C1G2I2"/>
<dbReference type="OMA" id="EMADQFV"/>
<dbReference type="OrthoDB" id="29021at33183"/>
<dbReference type="Proteomes" id="UP000001628">
    <property type="component" value="Unassembled WGS sequence"/>
</dbReference>
<dbReference type="GO" id="GO:0016020">
    <property type="term" value="C:membrane"/>
    <property type="evidence" value="ECO:0007669"/>
    <property type="project" value="UniProtKB-KW"/>
</dbReference>
<dbReference type="GO" id="GO:0005802">
    <property type="term" value="C:trans-Golgi network"/>
    <property type="evidence" value="ECO:0007669"/>
    <property type="project" value="TreeGrafter"/>
</dbReference>
<dbReference type="GO" id="GO:0004185">
    <property type="term" value="F:serine-type carboxypeptidase activity"/>
    <property type="evidence" value="ECO:0007669"/>
    <property type="project" value="UniProtKB-EC"/>
</dbReference>
<dbReference type="GO" id="GO:0006915">
    <property type="term" value="P:apoptotic process"/>
    <property type="evidence" value="ECO:0007669"/>
    <property type="project" value="UniProtKB-KW"/>
</dbReference>
<dbReference type="GO" id="GO:0006508">
    <property type="term" value="P:proteolysis"/>
    <property type="evidence" value="ECO:0007669"/>
    <property type="project" value="UniProtKB-KW"/>
</dbReference>
<dbReference type="FunFam" id="3.40.50.1820:FF:000121">
    <property type="entry name" value="Carboxypeptidase D"/>
    <property type="match status" value="1"/>
</dbReference>
<dbReference type="Gene3D" id="3.40.50.1820">
    <property type="entry name" value="alpha/beta hydrolase"/>
    <property type="match status" value="1"/>
</dbReference>
<dbReference type="InterPro" id="IPR029058">
    <property type="entry name" value="AB_hydrolase_fold"/>
</dbReference>
<dbReference type="InterPro" id="IPR001563">
    <property type="entry name" value="Peptidase_S10"/>
</dbReference>
<dbReference type="PANTHER" id="PTHR11802:SF190">
    <property type="entry name" value="PHEROMONE-PROCESSING CARBOXYPEPTIDASE KEX1"/>
    <property type="match status" value="1"/>
</dbReference>
<dbReference type="PANTHER" id="PTHR11802">
    <property type="entry name" value="SERINE PROTEASE FAMILY S10 SERINE CARBOXYPEPTIDASE"/>
    <property type="match status" value="1"/>
</dbReference>
<dbReference type="Pfam" id="PF00450">
    <property type="entry name" value="Peptidase_S10"/>
    <property type="match status" value="1"/>
</dbReference>
<dbReference type="PRINTS" id="PR00724">
    <property type="entry name" value="CRBOXYPTASEC"/>
</dbReference>
<dbReference type="SUPFAM" id="SSF53474">
    <property type="entry name" value="alpha/beta-Hydrolases"/>
    <property type="match status" value="1"/>
</dbReference>
<reference key="1">
    <citation type="journal article" date="2011" name="PLoS Genet.">
        <title>Comparative genomic analysis of human fungal pathogens causing paracoccidioidomycosis.</title>
        <authorList>
            <person name="Desjardins C.A."/>
            <person name="Champion M.D."/>
            <person name="Holder J.W."/>
            <person name="Muszewska A."/>
            <person name="Goldberg J."/>
            <person name="Bailao A.M."/>
            <person name="Brigido M.M."/>
            <person name="Ferreira M.E."/>
            <person name="Garcia A.M."/>
            <person name="Grynberg M."/>
            <person name="Gujja S."/>
            <person name="Heiman D.I."/>
            <person name="Henn M.R."/>
            <person name="Kodira C.D."/>
            <person name="Leon-Narvaez H."/>
            <person name="Longo L.V.G."/>
            <person name="Ma L.-J."/>
            <person name="Malavazi I."/>
            <person name="Matsuo A.L."/>
            <person name="Morais F.V."/>
            <person name="Pereira M."/>
            <person name="Rodriguez-Brito S."/>
            <person name="Sakthikumar S."/>
            <person name="Salem-Izacc S.M."/>
            <person name="Sykes S.M."/>
            <person name="Teixeira M.M."/>
            <person name="Vallejo M.C."/>
            <person name="Walter M.E."/>
            <person name="Yandava C."/>
            <person name="Young S."/>
            <person name="Zeng Q."/>
            <person name="Zucker J."/>
            <person name="Felipe M.S."/>
            <person name="Goldman G.H."/>
            <person name="Haas B.J."/>
            <person name="McEwen J.G."/>
            <person name="Nino-Vega G."/>
            <person name="Puccia R."/>
            <person name="San-Blas G."/>
            <person name="Soares C.M."/>
            <person name="Birren B.W."/>
            <person name="Cuomo C.A."/>
        </authorList>
    </citation>
    <scope>NUCLEOTIDE SEQUENCE [LARGE SCALE GENOMIC DNA]</scope>
    <source>
        <strain>Pb18</strain>
    </source>
</reference>
<keyword id="KW-0053">Apoptosis</keyword>
<keyword id="KW-0121">Carboxypeptidase</keyword>
<keyword id="KW-0325">Glycoprotein</keyword>
<keyword id="KW-0333">Golgi apparatus</keyword>
<keyword id="KW-0378">Hydrolase</keyword>
<keyword id="KW-0472">Membrane</keyword>
<keyword id="KW-0645">Protease</keyword>
<keyword id="KW-1185">Reference proteome</keyword>
<keyword id="KW-0732">Signal</keyword>
<keyword id="KW-0812">Transmembrane</keyword>
<keyword id="KW-1133">Transmembrane helix</keyword>
<gene>
    <name type="primary">KEX1</name>
    <name type="ORF">PADG_02348</name>
</gene>
<evidence type="ECO:0000250" key="1"/>
<evidence type="ECO:0000255" key="2"/>
<evidence type="ECO:0000256" key="3">
    <source>
        <dbReference type="SAM" id="MobiDB-lite"/>
    </source>
</evidence>
<evidence type="ECO:0000305" key="4"/>
<organism>
    <name type="scientific">Paracoccidioides brasiliensis (strain Pb18)</name>
    <dbReference type="NCBI Taxonomy" id="502780"/>
    <lineage>
        <taxon>Eukaryota</taxon>
        <taxon>Fungi</taxon>
        <taxon>Dikarya</taxon>
        <taxon>Ascomycota</taxon>
        <taxon>Pezizomycotina</taxon>
        <taxon>Eurotiomycetes</taxon>
        <taxon>Eurotiomycetidae</taxon>
        <taxon>Onygenales</taxon>
        <taxon>Ajellomycetaceae</taxon>
        <taxon>Paracoccidioides</taxon>
    </lineage>
</organism>
<proteinExistence type="inferred from homology"/>
<name>KEX1_PARBD</name>
<protein>
    <recommendedName>
        <fullName>Pheromone-processing carboxypeptidase KEX1</fullName>
        <ecNumber>3.4.16.6</ecNumber>
    </recommendedName>
    <alternativeName>
        <fullName>Carboxypeptidase D</fullName>
    </alternativeName>
</protein>
<feature type="signal peptide" evidence="2">
    <location>
        <begin position="1"/>
        <end position="27"/>
    </location>
</feature>
<feature type="chain" id="PRO_0000411932" description="Pheromone-processing carboxypeptidase KEX1">
    <location>
        <begin position="28"/>
        <end position="635"/>
    </location>
</feature>
<feature type="topological domain" description="Lumenal" evidence="2">
    <location>
        <begin position="28"/>
        <end position="514"/>
    </location>
</feature>
<feature type="transmembrane region" description="Helical" evidence="2">
    <location>
        <begin position="515"/>
        <end position="535"/>
    </location>
</feature>
<feature type="topological domain" description="Cytoplasmic" evidence="2">
    <location>
        <begin position="536"/>
        <end position="635"/>
    </location>
</feature>
<feature type="region of interest" description="Disordered" evidence="3">
    <location>
        <begin position="472"/>
        <end position="497"/>
    </location>
</feature>
<feature type="region of interest" description="Disordered" evidence="3">
    <location>
        <begin position="583"/>
        <end position="635"/>
    </location>
</feature>
<feature type="compositionally biased region" description="Polar residues" evidence="3">
    <location>
        <begin position="483"/>
        <end position="495"/>
    </location>
</feature>
<feature type="active site" evidence="1">
    <location>
        <position position="179"/>
    </location>
</feature>
<feature type="active site" evidence="1">
    <location>
        <position position="381"/>
    </location>
</feature>
<feature type="active site" evidence="1">
    <location>
        <position position="443"/>
    </location>
</feature>
<feature type="glycosylation site" description="N-linked (GlcNAc...) asparagine" evidence="2">
    <location>
        <position position="112"/>
    </location>
</feature>
<feature type="glycosylation site" description="N-linked (GlcNAc...) asparagine" evidence="2">
    <location>
        <position position="432"/>
    </location>
</feature>
<feature type="glycosylation site" description="N-linked (GlcNAc...) asparagine" evidence="2">
    <location>
        <position position="440"/>
    </location>
</feature>
<feature type="glycosylation site" description="N-linked (GlcNAc...) asparagine" evidence="2">
    <location>
        <position position="492"/>
    </location>
</feature>
<accession>C1G2I2</accession>
<comment type="function">
    <text evidence="1">Protease with a carboxypeptidase B-like function involved in the C-terminal processing of the lysine and arginine residues from protein precursors. Promotes cell fusion and is involved in the programmed cell death (By similarity).</text>
</comment>
<comment type="catalytic activity">
    <reaction>
        <text>Preferential release of a C-terminal arginine or lysine residue.</text>
        <dbReference type="EC" id="3.4.16.6"/>
    </reaction>
</comment>
<comment type="subcellular location">
    <subcellularLocation>
        <location evidence="1">Golgi apparatus</location>
        <location evidence="1">trans-Golgi network membrane</location>
        <topology evidence="1">Single-pass type I membrane protein</topology>
    </subcellularLocation>
</comment>
<comment type="similarity">
    <text evidence="4">Belongs to the peptidase S10 family.</text>
</comment>